<evidence type="ECO:0000255" key="1">
    <source>
        <dbReference type="HAMAP-Rule" id="MF_01186"/>
    </source>
</evidence>
<evidence type="ECO:0000256" key="2">
    <source>
        <dbReference type="SAM" id="MobiDB-lite"/>
    </source>
</evidence>
<keyword id="KW-0998">Cell outer membrane</keyword>
<keyword id="KW-0449">Lipoprotein</keyword>
<keyword id="KW-0472">Membrane</keyword>
<keyword id="KW-0564">Palmitate</keyword>
<keyword id="KW-0732">Signal</keyword>
<dbReference type="EMBL" id="CP001120">
    <property type="protein sequence ID" value="ACF68684.1"/>
    <property type="molecule type" value="Genomic_DNA"/>
</dbReference>
<dbReference type="RefSeq" id="WP_001269950.1">
    <property type="nucleotide sequence ID" value="NC_011083.1"/>
</dbReference>
<dbReference type="SMR" id="B4TB50"/>
<dbReference type="KEGG" id="seh:SeHA_C0763"/>
<dbReference type="HOGENOM" id="CLU_103309_1_1_6"/>
<dbReference type="Proteomes" id="UP000001866">
    <property type="component" value="Chromosome"/>
</dbReference>
<dbReference type="GO" id="GO:0009279">
    <property type="term" value="C:cell outer membrane"/>
    <property type="evidence" value="ECO:0007669"/>
    <property type="project" value="UniProtKB-SubCell"/>
</dbReference>
<dbReference type="GO" id="GO:1990351">
    <property type="term" value="C:transporter complex"/>
    <property type="evidence" value="ECO:0007669"/>
    <property type="project" value="TreeGrafter"/>
</dbReference>
<dbReference type="GO" id="GO:0001530">
    <property type="term" value="F:lipopolysaccharide binding"/>
    <property type="evidence" value="ECO:0007669"/>
    <property type="project" value="TreeGrafter"/>
</dbReference>
<dbReference type="GO" id="GO:0043165">
    <property type="term" value="P:Gram-negative-bacterium-type cell outer membrane assembly"/>
    <property type="evidence" value="ECO:0007669"/>
    <property type="project" value="UniProtKB-UniRule"/>
</dbReference>
<dbReference type="GO" id="GO:0015920">
    <property type="term" value="P:lipopolysaccharide transport"/>
    <property type="evidence" value="ECO:0007669"/>
    <property type="project" value="TreeGrafter"/>
</dbReference>
<dbReference type="FunFam" id="3.30.160.150:FF:000001">
    <property type="entry name" value="LPS-assembly lipoprotein LptE"/>
    <property type="match status" value="1"/>
</dbReference>
<dbReference type="Gene3D" id="3.30.160.150">
    <property type="entry name" value="Lipoprotein like domain"/>
    <property type="match status" value="1"/>
</dbReference>
<dbReference type="HAMAP" id="MF_01186">
    <property type="entry name" value="LPS_assembly_LptE"/>
    <property type="match status" value="1"/>
</dbReference>
<dbReference type="InterPro" id="IPR007485">
    <property type="entry name" value="LPS_assembly_LptE"/>
</dbReference>
<dbReference type="NCBIfam" id="NF008062">
    <property type="entry name" value="PRK10796.1"/>
    <property type="match status" value="1"/>
</dbReference>
<dbReference type="PANTHER" id="PTHR38098">
    <property type="entry name" value="LPS-ASSEMBLY LIPOPROTEIN LPTE"/>
    <property type="match status" value="1"/>
</dbReference>
<dbReference type="PANTHER" id="PTHR38098:SF1">
    <property type="entry name" value="LPS-ASSEMBLY LIPOPROTEIN LPTE"/>
    <property type="match status" value="1"/>
</dbReference>
<dbReference type="Pfam" id="PF04390">
    <property type="entry name" value="LptE"/>
    <property type="match status" value="1"/>
</dbReference>
<dbReference type="PROSITE" id="PS51257">
    <property type="entry name" value="PROKAR_LIPOPROTEIN"/>
    <property type="match status" value="1"/>
</dbReference>
<accession>B4TB50</accession>
<comment type="function">
    <text evidence="1">Together with LptD, is involved in the assembly of lipopolysaccharide (LPS) at the surface of the outer membrane. Required for the proper assembly of LptD. Binds LPS and may serve as the LPS recognition site at the outer membrane.</text>
</comment>
<comment type="subunit">
    <text evidence="1">Component of the lipopolysaccharide transport and assembly complex. Interacts with LptD.</text>
</comment>
<comment type="subcellular location">
    <subcellularLocation>
        <location evidence="1">Cell outer membrane</location>
        <topology evidence="1">Lipid-anchor</topology>
    </subcellularLocation>
</comment>
<comment type="similarity">
    <text evidence="1">Belongs to the LptE lipoprotein family.</text>
</comment>
<organism>
    <name type="scientific">Salmonella heidelberg (strain SL476)</name>
    <dbReference type="NCBI Taxonomy" id="454169"/>
    <lineage>
        <taxon>Bacteria</taxon>
        <taxon>Pseudomonadati</taxon>
        <taxon>Pseudomonadota</taxon>
        <taxon>Gammaproteobacteria</taxon>
        <taxon>Enterobacterales</taxon>
        <taxon>Enterobacteriaceae</taxon>
        <taxon>Salmonella</taxon>
    </lineage>
</organism>
<feature type="signal peptide" evidence="1">
    <location>
        <begin position="1"/>
        <end position="18"/>
    </location>
</feature>
<feature type="chain" id="PRO_1000138278" description="LPS-assembly lipoprotein LptE">
    <location>
        <begin position="19"/>
        <end position="196"/>
    </location>
</feature>
<feature type="region of interest" description="Disordered" evidence="2">
    <location>
        <begin position="171"/>
        <end position="196"/>
    </location>
</feature>
<feature type="lipid moiety-binding region" description="N-palmitoyl cysteine" evidence="1">
    <location>
        <position position="19"/>
    </location>
</feature>
<feature type="lipid moiety-binding region" description="S-diacylglycerol cysteine" evidence="1">
    <location>
        <position position="19"/>
    </location>
</feature>
<reference key="1">
    <citation type="journal article" date="2011" name="J. Bacteriol.">
        <title>Comparative genomics of 28 Salmonella enterica isolates: evidence for CRISPR-mediated adaptive sublineage evolution.</title>
        <authorList>
            <person name="Fricke W.F."/>
            <person name="Mammel M.K."/>
            <person name="McDermott P.F."/>
            <person name="Tartera C."/>
            <person name="White D.G."/>
            <person name="Leclerc J.E."/>
            <person name="Ravel J."/>
            <person name="Cebula T.A."/>
        </authorList>
    </citation>
    <scope>NUCLEOTIDE SEQUENCE [LARGE SCALE GENOMIC DNA]</scope>
    <source>
        <strain>SL476</strain>
    </source>
</reference>
<protein>
    <recommendedName>
        <fullName evidence="1">LPS-assembly lipoprotein LptE</fullName>
    </recommendedName>
</protein>
<name>LPTE_SALHS</name>
<sequence>MRYLVTLLLSLAVLVTAGCGWHLRSTTQVPASMKTMILDSGDPNGPLSRAVRNQLRLNNVNLLDKDTTRKDVPSLRLGTVTISQDTASVFQDGQTAEYQMVMTVNASVLIPGHDIYPISTKVYRSFFDNPQMALAKDNEQAMIVQEMYDKAAEQLIRKLTSVRAADIQATKEEATADNETAAPASTPARVSTTLSN</sequence>
<proteinExistence type="inferred from homology"/>
<gene>
    <name evidence="1" type="primary">lptE</name>
    <name type="synonym">rlpB</name>
    <name type="ordered locus">SeHA_C0763</name>
</gene>